<accession>Q00944</accession>
<gene>
    <name type="primary">PTK2</name>
    <name type="synonym">FAK</name>
    <name type="synonym">FAK1</name>
</gene>
<organism>
    <name type="scientific">Gallus gallus</name>
    <name type="common">Chicken</name>
    <dbReference type="NCBI Taxonomy" id="9031"/>
    <lineage>
        <taxon>Eukaryota</taxon>
        <taxon>Metazoa</taxon>
        <taxon>Chordata</taxon>
        <taxon>Craniata</taxon>
        <taxon>Vertebrata</taxon>
        <taxon>Euteleostomi</taxon>
        <taxon>Archelosauria</taxon>
        <taxon>Archosauria</taxon>
        <taxon>Dinosauria</taxon>
        <taxon>Saurischia</taxon>
        <taxon>Theropoda</taxon>
        <taxon>Coelurosauria</taxon>
        <taxon>Aves</taxon>
        <taxon>Neognathae</taxon>
        <taxon>Galloanserae</taxon>
        <taxon>Galliformes</taxon>
        <taxon>Phasianidae</taxon>
        <taxon>Phasianinae</taxon>
        <taxon>Gallus</taxon>
    </lineage>
</organism>
<dbReference type="EC" id="2.7.10.2"/>
<dbReference type="EMBL" id="M86656">
    <property type="protein sequence ID" value="AAA48765.1"/>
    <property type="molecule type" value="mRNA"/>
</dbReference>
<dbReference type="EMBL" id="L08402">
    <property type="protein sequence ID" value="AAA48766.1"/>
    <property type="molecule type" value="mRNA"/>
</dbReference>
<dbReference type="PIR" id="A45388">
    <property type="entry name" value="A45388"/>
</dbReference>
<dbReference type="PIR" id="PC1239">
    <property type="entry name" value="PC1239"/>
</dbReference>
<dbReference type="RefSeq" id="NP_990766.1">
    <property type="nucleotide sequence ID" value="NM_205435.1"/>
</dbReference>
<dbReference type="PDB" id="1KTM">
    <property type="method" value="NMR"/>
    <property type="chains" value="A=916-1053"/>
</dbReference>
<dbReference type="PDB" id="1PV3">
    <property type="method" value="NMR"/>
    <property type="chains" value="A=920-1053"/>
</dbReference>
<dbReference type="PDB" id="1QVX">
    <property type="method" value="NMR"/>
    <property type="chains" value="A=920-1053"/>
</dbReference>
<dbReference type="PDB" id="2AEH">
    <property type="method" value="X-ray"/>
    <property type="resolution" value="2.53 A"/>
    <property type="chains" value="A/B=31-399"/>
</dbReference>
<dbReference type="PDB" id="2AL6">
    <property type="method" value="X-ray"/>
    <property type="resolution" value="2.35 A"/>
    <property type="chains" value="A/B=31-405"/>
</dbReference>
<dbReference type="PDB" id="2J0J">
    <property type="method" value="X-ray"/>
    <property type="resolution" value="2.80 A"/>
    <property type="chains" value="A=31-686"/>
</dbReference>
<dbReference type="PDB" id="2J0K">
    <property type="method" value="X-ray"/>
    <property type="resolution" value="3.00 A"/>
    <property type="chains" value="A/B=31-686"/>
</dbReference>
<dbReference type="PDB" id="2J0L">
    <property type="method" value="X-ray"/>
    <property type="resolution" value="2.30 A"/>
    <property type="chains" value="A=411-686"/>
</dbReference>
<dbReference type="PDB" id="2J0M">
    <property type="method" value="X-ray"/>
    <property type="resolution" value="2.80 A"/>
    <property type="chains" value="A=31-399, B=411-686"/>
</dbReference>
<dbReference type="PDB" id="2JKK">
    <property type="method" value="X-ray"/>
    <property type="resolution" value="2.00 A"/>
    <property type="chains" value="A=411-686"/>
</dbReference>
<dbReference type="PDB" id="2JKM">
    <property type="method" value="X-ray"/>
    <property type="resolution" value="2.31 A"/>
    <property type="chains" value="A=411-686"/>
</dbReference>
<dbReference type="PDB" id="2JKO">
    <property type="method" value="X-ray"/>
    <property type="resolution" value="1.65 A"/>
    <property type="chains" value="A=411-686"/>
</dbReference>
<dbReference type="PDB" id="2JKQ">
    <property type="method" value="X-ray"/>
    <property type="resolution" value="2.60 A"/>
    <property type="chains" value="A=411-686"/>
</dbReference>
<dbReference type="PDB" id="2L6F">
    <property type="method" value="NMR"/>
    <property type="chains" value="A=916-1053"/>
</dbReference>
<dbReference type="PDB" id="2L6G">
    <property type="method" value="NMR"/>
    <property type="chains" value="A=916-1053"/>
</dbReference>
<dbReference type="PDB" id="2L6H">
    <property type="method" value="NMR"/>
    <property type="chains" value="A=916-1053"/>
</dbReference>
<dbReference type="PDB" id="3ZDT">
    <property type="method" value="X-ray"/>
    <property type="resolution" value="3.15 A"/>
    <property type="chains" value="A/B=31-405"/>
</dbReference>
<dbReference type="PDB" id="4BRX">
    <property type="method" value="X-ray"/>
    <property type="resolution" value="2.05 A"/>
    <property type="chains" value="A=411-686"/>
</dbReference>
<dbReference type="PDB" id="4C7T">
    <property type="method" value="X-ray"/>
    <property type="resolution" value="2.05 A"/>
    <property type="chains" value="A=411-686"/>
</dbReference>
<dbReference type="PDB" id="4CYE">
    <property type="method" value="X-ray"/>
    <property type="resolution" value="3.20 A"/>
    <property type="chains" value="A/B=31-405"/>
</dbReference>
<dbReference type="PDB" id="4D4R">
    <property type="method" value="X-ray"/>
    <property type="resolution" value="1.55 A"/>
    <property type="chains" value="A/B=411-686"/>
</dbReference>
<dbReference type="PDB" id="4D4S">
    <property type="method" value="X-ray"/>
    <property type="resolution" value="2.00 A"/>
    <property type="chains" value="A/B=411-686"/>
</dbReference>
<dbReference type="PDB" id="4D4V">
    <property type="method" value="X-ray"/>
    <property type="resolution" value="2.10 A"/>
    <property type="chains" value="A/B=411-686"/>
</dbReference>
<dbReference type="PDB" id="4D4Y">
    <property type="method" value="X-ray"/>
    <property type="resolution" value="1.80 A"/>
    <property type="chains" value="A/B=411-686"/>
</dbReference>
<dbReference type="PDB" id="4D55">
    <property type="method" value="X-ray"/>
    <property type="resolution" value="2.30 A"/>
    <property type="chains" value="A=411-686"/>
</dbReference>
<dbReference type="PDB" id="4D58">
    <property type="method" value="X-ray"/>
    <property type="resolution" value="1.95 A"/>
    <property type="chains" value="A/B=411-686"/>
</dbReference>
<dbReference type="PDB" id="4D5H">
    <property type="method" value="X-ray"/>
    <property type="resolution" value="1.75 A"/>
    <property type="chains" value="A/B=411-686"/>
</dbReference>
<dbReference type="PDB" id="4D5K">
    <property type="method" value="X-ray"/>
    <property type="resolution" value="1.75 A"/>
    <property type="chains" value="A/B=411-686"/>
</dbReference>
<dbReference type="PDB" id="6CB0">
    <property type="method" value="X-ray"/>
    <property type="resolution" value="1.97 A"/>
    <property type="chains" value="A/B=31-405"/>
</dbReference>
<dbReference type="PDB" id="6GCR">
    <property type="method" value="X-ray"/>
    <property type="resolution" value="2.30 A"/>
    <property type="chains" value="A=411-686"/>
</dbReference>
<dbReference type="PDB" id="6GCW">
    <property type="method" value="X-ray"/>
    <property type="resolution" value="2.00 A"/>
    <property type="chains" value="A/B=411-686"/>
</dbReference>
<dbReference type="PDB" id="6GCX">
    <property type="method" value="X-ray"/>
    <property type="resolution" value="1.55 A"/>
    <property type="chains" value="A=411-686"/>
</dbReference>
<dbReference type="PDB" id="6TY3">
    <property type="method" value="EM"/>
    <property type="resolution" value="6.32 A"/>
    <property type="chains" value="A/B=30-686"/>
</dbReference>
<dbReference type="PDB" id="6TY4">
    <property type="method" value="EM"/>
    <property type="resolution" value="5.96 A"/>
    <property type="chains" value="A/B=30-686"/>
</dbReference>
<dbReference type="PDBsum" id="1KTM"/>
<dbReference type="PDBsum" id="1PV3"/>
<dbReference type="PDBsum" id="1QVX"/>
<dbReference type="PDBsum" id="2AEH"/>
<dbReference type="PDBsum" id="2AL6"/>
<dbReference type="PDBsum" id="2J0J"/>
<dbReference type="PDBsum" id="2J0K"/>
<dbReference type="PDBsum" id="2J0L"/>
<dbReference type="PDBsum" id="2J0M"/>
<dbReference type="PDBsum" id="2JKK"/>
<dbReference type="PDBsum" id="2JKM"/>
<dbReference type="PDBsum" id="2JKO"/>
<dbReference type="PDBsum" id="2JKQ"/>
<dbReference type="PDBsum" id="2L6F"/>
<dbReference type="PDBsum" id="2L6G"/>
<dbReference type="PDBsum" id="2L6H"/>
<dbReference type="PDBsum" id="3ZDT"/>
<dbReference type="PDBsum" id="4BRX"/>
<dbReference type="PDBsum" id="4C7T"/>
<dbReference type="PDBsum" id="4CYE"/>
<dbReference type="PDBsum" id="4D4R"/>
<dbReference type="PDBsum" id="4D4S"/>
<dbReference type="PDBsum" id="4D4V"/>
<dbReference type="PDBsum" id="4D4Y"/>
<dbReference type="PDBsum" id="4D55"/>
<dbReference type="PDBsum" id="4D58"/>
<dbReference type="PDBsum" id="4D5H"/>
<dbReference type="PDBsum" id="4D5K"/>
<dbReference type="PDBsum" id="6CB0"/>
<dbReference type="PDBsum" id="6GCR"/>
<dbReference type="PDBsum" id="6GCW"/>
<dbReference type="PDBsum" id="6GCX"/>
<dbReference type="PDBsum" id="6TY3"/>
<dbReference type="PDBsum" id="6TY4"/>
<dbReference type="BMRB" id="Q00944"/>
<dbReference type="EMDB" id="EMD-10615"/>
<dbReference type="EMDB" id="EMD-10616"/>
<dbReference type="SMR" id="Q00944"/>
<dbReference type="BioGRID" id="676665">
    <property type="interactions" value="2"/>
</dbReference>
<dbReference type="ELM" id="Q00944"/>
<dbReference type="FunCoup" id="Q00944">
    <property type="interactions" value="1574"/>
</dbReference>
<dbReference type="IntAct" id="Q00944">
    <property type="interactions" value="11"/>
</dbReference>
<dbReference type="STRING" id="9031.ENSGALP00000071114"/>
<dbReference type="iPTMnet" id="Q00944"/>
<dbReference type="PaxDb" id="9031-ENSGALP00000026014"/>
<dbReference type="KEGG" id="gga:396416"/>
<dbReference type="VEuPathDB" id="HostDB:geneid_396416"/>
<dbReference type="eggNOG" id="KOG4257">
    <property type="taxonomic scope" value="Eukaryota"/>
</dbReference>
<dbReference type="HOGENOM" id="CLU_002646_0_0_1"/>
<dbReference type="InParanoid" id="Q00944"/>
<dbReference type="OrthoDB" id="9976756at2759"/>
<dbReference type="PhylomeDB" id="Q00944"/>
<dbReference type="BRENDA" id="2.7.10.2">
    <property type="organism ID" value="1306"/>
</dbReference>
<dbReference type="Reactome" id="R-GGA-111465">
    <property type="pathway name" value="Apoptotic cleavage of cellular proteins"/>
</dbReference>
<dbReference type="Reactome" id="R-GGA-2029482">
    <property type="pathway name" value="Regulation of actin dynamics for phagocytic cup formation"/>
</dbReference>
<dbReference type="Reactome" id="R-GGA-354192">
    <property type="pathway name" value="Integrin signaling"/>
</dbReference>
<dbReference type="Reactome" id="R-GGA-354194">
    <property type="pathway name" value="GRB2:SOS provides linkage to MAPK signaling for Integrins"/>
</dbReference>
<dbReference type="Reactome" id="R-GGA-372708">
    <property type="pathway name" value="p130Cas linkage to MAPK signaling for integrins"/>
</dbReference>
<dbReference type="Reactome" id="R-GGA-375165">
    <property type="pathway name" value="NCAM signaling for neurite out-growth"/>
</dbReference>
<dbReference type="Reactome" id="R-GGA-3928662">
    <property type="pathway name" value="EPHB-mediated forward signaling"/>
</dbReference>
<dbReference type="Reactome" id="R-GGA-418885">
    <property type="pathway name" value="DCC mediated attractive signaling"/>
</dbReference>
<dbReference type="Reactome" id="R-GGA-4420097">
    <property type="pathway name" value="VEGFA-VEGFR2 Pathway"/>
</dbReference>
<dbReference type="Reactome" id="R-GGA-5663213">
    <property type="pathway name" value="RHO GTPases Activate WASPs and WAVEs"/>
</dbReference>
<dbReference type="Reactome" id="R-GGA-5673001">
    <property type="pathway name" value="RAF/MAP kinase cascade"/>
</dbReference>
<dbReference type="Reactome" id="R-GGA-8874081">
    <property type="pathway name" value="MET activates PTK2 signaling"/>
</dbReference>
<dbReference type="Reactome" id="R-GGA-9009391">
    <property type="pathway name" value="Extra-nuclear estrogen signaling"/>
</dbReference>
<dbReference type="Reactome" id="R-GGA-9860927">
    <property type="pathway name" value="Turbulent (oscillatory, disturbed) flow shear stress activates signaling by PIEZO1 and integrins in endothelial cells"/>
</dbReference>
<dbReference type="EvolutionaryTrace" id="Q00944"/>
<dbReference type="PRO" id="PR:Q00944"/>
<dbReference type="Proteomes" id="UP000000539">
    <property type="component" value="Chromosome 2"/>
</dbReference>
<dbReference type="Bgee" id="ENSGALG00000031741">
    <property type="expression patterns" value="Expressed in ovary and 12 other cell types or tissues"/>
</dbReference>
<dbReference type="GO" id="GO:0005938">
    <property type="term" value="C:cell cortex"/>
    <property type="evidence" value="ECO:0007669"/>
    <property type="project" value="UniProtKB-SubCell"/>
</dbReference>
<dbReference type="GO" id="GO:0005813">
    <property type="term" value="C:centrosome"/>
    <property type="evidence" value="ECO:0007669"/>
    <property type="project" value="UniProtKB-SubCell"/>
</dbReference>
<dbReference type="GO" id="GO:0036064">
    <property type="term" value="C:ciliary basal body"/>
    <property type="evidence" value="ECO:0000250"/>
    <property type="project" value="UniProtKB"/>
</dbReference>
<dbReference type="GO" id="GO:0005737">
    <property type="term" value="C:cytoplasm"/>
    <property type="evidence" value="ECO:0000314"/>
    <property type="project" value="AgBase"/>
</dbReference>
<dbReference type="GO" id="GO:0005925">
    <property type="term" value="C:focal adhesion"/>
    <property type="evidence" value="ECO:0000314"/>
    <property type="project" value="AgBase"/>
</dbReference>
<dbReference type="GO" id="GO:0005634">
    <property type="term" value="C:nucleus"/>
    <property type="evidence" value="ECO:0007669"/>
    <property type="project" value="UniProtKB-SubCell"/>
</dbReference>
<dbReference type="GO" id="GO:0048471">
    <property type="term" value="C:perinuclear region of cytoplasm"/>
    <property type="evidence" value="ECO:0007669"/>
    <property type="project" value="UniProtKB-SubCell"/>
</dbReference>
<dbReference type="GO" id="GO:0005886">
    <property type="term" value="C:plasma membrane"/>
    <property type="evidence" value="ECO:0000318"/>
    <property type="project" value="GO_Central"/>
</dbReference>
<dbReference type="GO" id="GO:0042383">
    <property type="term" value="C:sarcolemma"/>
    <property type="evidence" value="ECO:0000314"/>
    <property type="project" value="AgBase"/>
</dbReference>
<dbReference type="GO" id="GO:0005524">
    <property type="term" value="F:ATP binding"/>
    <property type="evidence" value="ECO:0007669"/>
    <property type="project" value="UniProtKB-KW"/>
</dbReference>
<dbReference type="GO" id="GO:0004198">
    <property type="term" value="F:calcium-dependent cysteine-type endopeptidase activity"/>
    <property type="evidence" value="ECO:0000315"/>
    <property type="project" value="AgBase"/>
</dbReference>
<dbReference type="GO" id="GO:0042802">
    <property type="term" value="F:identical protein binding"/>
    <property type="evidence" value="ECO:0000353"/>
    <property type="project" value="IntAct"/>
</dbReference>
<dbReference type="GO" id="GO:0005178">
    <property type="term" value="F:integrin binding"/>
    <property type="evidence" value="ECO:0000353"/>
    <property type="project" value="AgBase"/>
</dbReference>
<dbReference type="GO" id="GO:0140677">
    <property type="term" value="F:molecular function activator activity"/>
    <property type="evidence" value="ECO:0000269"/>
    <property type="project" value="DisProt"/>
</dbReference>
<dbReference type="GO" id="GO:0004715">
    <property type="term" value="F:non-membrane spanning protein tyrosine kinase activity"/>
    <property type="evidence" value="ECO:0000318"/>
    <property type="project" value="GO_Central"/>
</dbReference>
<dbReference type="GO" id="GO:0002020">
    <property type="term" value="F:protease binding"/>
    <property type="evidence" value="ECO:0000353"/>
    <property type="project" value="AgBase"/>
</dbReference>
<dbReference type="GO" id="GO:0004713">
    <property type="term" value="F:protein tyrosine kinase activity"/>
    <property type="evidence" value="ECO:0000314"/>
    <property type="project" value="AgBase"/>
</dbReference>
<dbReference type="GO" id="GO:0007015">
    <property type="term" value="P:actin filament organization"/>
    <property type="evidence" value="ECO:0000315"/>
    <property type="project" value="AgBase"/>
</dbReference>
<dbReference type="GO" id="GO:0060055">
    <property type="term" value="P:angiogenesis involved in wound healing"/>
    <property type="evidence" value="ECO:0000315"/>
    <property type="project" value="AgBase"/>
</dbReference>
<dbReference type="GO" id="GO:0007173">
    <property type="term" value="P:epidermal growth factor receptor signaling pathway"/>
    <property type="evidence" value="ECO:0000318"/>
    <property type="project" value="GO_Central"/>
</dbReference>
<dbReference type="GO" id="GO:2000811">
    <property type="term" value="P:negative regulation of anoikis"/>
    <property type="evidence" value="ECO:0000315"/>
    <property type="project" value="AgBase"/>
</dbReference>
<dbReference type="GO" id="GO:0010812">
    <property type="term" value="P:negative regulation of cell-substrate adhesion"/>
    <property type="evidence" value="ECO:0000315"/>
    <property type="project" value="AgBase"/>
</dbReference>
<dbReference type="GO" id="GO:0031953">
    <property type="term" value="P:negative regulation of protein autophosphorylation"/>
    <property type="evidence" value="ECO:0000315"/>
    <property type="project" value="AgBase"/>
</dbReference>
<dbReference type="GO" id="GO:0030335">
    <property type="term" value="P:positive regulation of cell migration"/>
    <property type="evidence" value="ECO:0000318"/>
    <property type="project" value="GO_Central"/>
</dbReference>
<dbReference type="GO" id="GO:0008284">
    <property type="term" value="P:positive regulation of cell population proliferation"/>
    <property type="evidence" value="ECO:0000315"/>
    <property type="project" value="AgBase"/>
</dbReference>
<dbReference type="GO" id="GO:0051894">
    <property type="term" value="P:positive regulation of focal adhesion assembly"/>
    <property type="evidence" value="ECO:0000315"/>
    <property type="project" value="AgBase"/>
</dbReference>
<dbReference type="GO" id="GO:0032092">
    <property type="term" value="P:positive regulation of protein binding"/>
    <property type="evidence" value="ECO:0000315"/>
    <property type="project" value="AgBase"/>
</dbReference>
<dbReference type="GO" id="GO:0061098">
    <property type="term" value="P:positive regulation of protein tyrosine kinase activity"/>
    <property type="evidence" value="ECO:0000315"/>
    <property type="project" value="AgBase"/>
</dbReference>
<dbReference type="GO" id="GO:1904237">
    <property type="term" value="P:positive regulation of substrate-dependent cell migration, cell attachment to substrate"/>
    <property type="evidence" value="ECO:0000315"/>
    <property type="project" value="AgBase"/>
</dbReference>
<dbReference type="GO" id="GO:0046777">
    <property type="term" value="P:protein autophosphorylation"/>
    <property type="evidence" value="ECO:0000314"/>
    <property type="project" value="AgBase"/>
</dbReference>
<dbReference type="GO" id="GO:0140650">
    <property type="term" value="P:radial glia-guided pyramidal neuron migration"/>
    <property type="evidence" value="ECO:0000315"/>
    <property type="project" value="GO_Central"/>
</dbReference>
<dbReference type="GO" id="GO:0030155">
    <property type="term" value="P:regulation of cell adhesion"/>
    <property type="evidence" value="ECO:0000318"/>
    <property type="project" value="GO_Central"/>
</dbReference>
<dbReference type="GO" id="GO:0035994">
    <property type="term" value="P:response to muscle stretch"/>
    <property type="evidence" value="ECO:0000314"/>
    <property type="project" value="AgBase"/>
</dbReference>
<dbReference type="GO" id="GO:0009268">
    <property type="term" value="P:response to pH"/>
    <property type="evidence" value="ECO:0000315"/>
    <property type="project" value="AgBase"/>
</dbReference>
<dbReference type="GO" id="GO:0007172">
    <property type="term" value="P:signal complex assembly"/>
    <property type="evidence" value="ECO:0007669"/>
    <property type="project" value="InterPro"/>
</dbReference>
<dbReference type="GO" id="GO:0044319">
    <property type="term" value="P:wound healing, spreading of cells"/>
    <property type="evidence" value="ECO:0000315"/>
    <property type="project" value="AgBase"/>
</dbReference>
<dbReference type="CDD" id="cd14473">
    <property type="entry name" value="FERM_B-lobe"/>
    <property type="match status" value="1"/>
</dbReference>
<dbReference type="CDD" id="cd13190">
    <property type="entry name" value="FERM_C_FAK1"/>
    <property type="match status" value="1"/>
</dbReference>
<dbReference type="CDD" id="cd05056">
    <property type="entry name" value="PTKc_FAK"/>
    <property type="match status" value="1"/>
</dbReference>
<dbReference type="DisProt" id="DP02120"/>
<dbReference type="FunFam" id="1.20.120.330:FF:000001">
    <property type="entry name" value="focal adhesion kinase 1 isoform X1"/>
    <property type="match status" value="1"/>
</dbReference>
<dbReference type="FunFam" id="2.30.29.30:FF:000058">
    <property type="entry name" value="focal adhesion kinase 1 isoform X1"/>
    <property type="match status" value="1"/>
</dbReference>
<dbReference type="FunFam" id="3.10.20.90:FF:000021">
    <property type="entry name" value="focal adhesion kinase 1 isoform X1"/>
    <property type="match status" value="1"/>
</dbReference>
<dbReference type="FunFam" id="3.30.200.20:FF:000047">
    <property type="entry name" value="focal adhesion kinase 1 isoform X2"/>
    <property type="match status" value="1"/>
</dbReference>
<dbReference type="FunFam" id="1.10.510.10:FF:000039">
    <property type="entry name" value="Focal adhesion kinase, isoform D"/>
    <property type="match status" value="1"/>
</dbReference>
<dbReference type="FunFam" id="1.20.80.10:FF:000004">
    <property type="entry name" value="Protein-tyrosine kinase 2-beta isoform 1"/>
    <property type="match status" value="1"/>
</dbReference>
<dbReference type="Gene3D" id="1.20.80.10">
    <property type="match status" value="1"/>
</dbReference>
<dbReference type="Gene3D" id="1.20.120.330">
    <property type="entry name" value="Nucleotidyltransferases domain 2"/>
    <property type="match status" value="1"/>
</dbReference>
<dbReference type="Gene3D" id="3.10.20.90">
    <property type="entry name" value="Phosphatidylinositol 3-kinase Catalytic Subunit, Chain A, domain 1"/>
    <property type="match status" value="1"/>
</dbReference>
<dbReference type="Gene3D" id="3.30.200.20">
    <property type="entry name" value="Phosphorylase Kinase, domain 1"/>
    <property type="match status" value="1"/>
</dbReference>
<dbReference type="Gene3D" id="2.30.29.30">
    <property type="entry name" value="Pleckstrin-homology domain (PH domain)/Phosphotyrosine-binding domain (PTB)"/>
    <property type="match status" value="1"/>
</dbReference>
<dbReference type="Gene3D" id="1.20.5.540">
    <property type="entry name" value="Single helix bin"/>
    <property type="match status" value="1"/>
</dbReference>
<dbReference type="Gene3D" id="1.10.510.10">
    <property type="entry name" value="Transferase(Phosphotransferase) domain 1"/>
    <property type="match status" value="1"/>
</dbReference>
<dbReference type="InterPro" id="IPR019749">
    <property type="entry name" value="Band_41_domain"/>
</dbReference>
<dbReference type="InterPro" id="IPR041390">
    <property type="entry name" value="FADK_N"/>
</dbReference>
<dbReference type="InterPro" id="IPR049385">
    <property type="entry name" value="FAK1-like_FERM_C"/>
</dbReference>
<dbReference type="InterPro" id="IPR041784">
    <property type="entry name" value="FAK1/PYK2_FERM_C"/>
</dbReference>
<dbReference type="InterPro" id="IPR014352">
    <property type="entry name" value="FERM/acyl-CoA-bd_prot_sf"/>
</dbReference>
<dbReference type="InterPro" id="IPR035963">
    <property type="entry name" value="FERM_2"/>
</dbReference>
<dbReference type="InterPro" id="IPR019748">
    <property type="entry name" value="FERM_central"/>
</dbReference>
<dbReference type="InterPro" id="IPR000299">
    <property type="entry name" value="FERM_domain"/>
</dbReference>
<dbReference type="InterPro" id="IPR036137">
    <property type="entry name" value="Focal_adhe_kin_target_dom_sf"/>
</dbReference>
<dbReference type="InterPro" id="IPR005189">
    <property type="entry name" value="Focal_adhesion_kin_target_dom"/>
</dbReference>
<dbReference type="InterPro" id="IPR011009">
    <property type="entry name" value="Kinase-like_dom_sf"/>
</dbReference>
<dbReference type="InterPro" id="IPR011993">
    <property type="entry name" value="PH-like_dom_sf"/>
</dbReference>
<dbReference type="InterPro" id="IPR000719">
    <property type="entry name" value="Prot_kinase_dom"/>
</dbReference>
<dbReference type="InterPro" id="IPR017441">
    <property type="entry name" value="Protein_kinase_ATP_BS"/>
</dbReference>
<dbReference type="InterPro" id="IPR001245">
    <property type="entry name" value="Ser-Thr/Tyr_kinase_cat_dom"/>
</dbReference>
<dbReference type="InterPro" id="IPR008266">
    <property type="entry name" value="Tyr_kinase_AS"/>
</dbReference>
<dbReference type="InterPro" id="IPR020635">
    <property type="entry name" value="Tyr_kinase_cat_dom"/>
</dbReference>
<dbReference type="InterPro" id="IPR029071">
    <property type="entry name" value="Ubiquitin-like_domsf"/>
</dbReference>
<dbReference type="PANTHER" id="PTHR46221">
    <property type="entry name" value="FERM AND PDZ DOMAIN-CONTAINING PROTEIN FAMILY MEMBER"/>
    <property type="match status" value="1"/>
</dbReference>
<dbReference type="PANTHER" id="PTHR46221:SF12">
    <property type="entry name" value="NON-SPECIFIC PROTEIN-TYROSINE KINASE"/>
    <property type="match status" value="1"/>
</dbReference>
<dbReference type="Pfam" id="PF21477">
    <property type="entry name" value="FERM_C_FAK1"/>
    <property type="match status" value="1"/>
</dbReference>
<dbReference type="Pfam" id="PF00373">
    <property type="entry name" value="FERM_M"/>
    <property type="match status" value="1"/>
</dbReference>
<dbReference type="Pfam" id="PF18038">
    <property type="entry name" value="FERM_N_2"/>
    <property type="match status" value="1"/>
</dbReference>
<dbReference type="Pfam" id="PF03623">
    <property type="entry name" value="Focal_AT"/>
    <property type="match status" value="1"/>
</dbReference>
<dbReference type="Pfam" id="PF07714">
    <property type="entry name" value="PK_Tyr_Ser-Thr"/>
    <property type="match status" value="1"/>
</dbReference>
<dbReference type="PRINTS" id="PR00109">
    <property type="entry name" value="TYRKINASE"/>
</dbReference>
<dbReference type="SMART" id="SM00295">
    <property type="entry name" value="B41"/>
    <property type="match status" value="1"/>
</dbReference>
<dbReference type="SMART" id="SM00219">
    <property type="entry name" value="TyrKc"/>
    <property type="match status" value="1"/>
</dbReference>
<dbReference type="SUPFAM" id="SSF68993">
    <property type="entry name" value="FAT domain of focal adhesion kinase"/>
    <property type="match status" value="1"/>
</dbReference>
<dbReference type="SUPFAM" id="SSF50729">
    <property type="entry name" value="PH domain-like"/>
    <property type="match status" value="1"/>
</dbReference>
<dbReference type="SUPFAM" id="SSF56112">
    <property type="entry name" value="Protein kinase-like (PK-like)"/>
    <property type="match status" value="1"/>
</dbReference>
<dbReference type="SUPFAM" id="SSF47031">
    <property type="entry name" value="Second domain of FERM"/>
    <property type="match status" value="1"/>
</dbReference>
<dbReference type="SUPFAM" id="SSF54236">
    <property type="entry name" value="Ubiquitin-like"/>
    <property type="match status" value="1"/>
</dbReference>
<dbReference type="PROSITE" id="PS00661">
    <property type="entry name" value="FERM_2"/>
    <property type="match status" value="1"/>
</dbReference>
<dbReference type="PROSITE" id="PS50057">
    <property type="entry name" value="FERM_3"/>
    <property type="match status" value="1"/>
</dbReference>
<dbReference type="PROSITE" id="PS00107">
    <property type="entry name" value="PROTEIN_KINASE_ATP"/>
    <property type="match status" value="1"/>
</dbReference>
<dbReference type="PROSITE" id="PS50011">
    <property type="entry name" value="PROTEIN_KINASE_DOM"/>
    <property type="match status" value="1"/>
</dbReference>
<dbReference type="PROSITE" id="PS00109">
    <property type="entry name" value="PROTEIN_KINASE_TYR"/>
    <property type="match status" value="1"/>
</dbReference>
<reference key="1">
    <citation type="journal article" date="1992" name="Proc. Natl. Acad. Sci. U.S.A.">
        <title>pp125FAK a structurally distinctive protein-tyrosine kinase associated with focal adhesions.</title>
        <authorList>
            <person name="Schaller M.D."/>
            <person name="Borgman C.A."/>
            <person name="Cobb B.S."/>
            <person name="Vines R.R."/>
            <person name="Reynolds A.B."/>
            <person name="Parsons J.T."/>
        </authorList>
    </citation>
    <scope>NUCLEOTIDE SEQUENCE [MRNA] OF 26-1053 (ISOFORM 1)</scope>
    <source>
        <tissue>Embryo</tissue>
    </source>
</reference>
<reference key="2">
    <citation type="journal article" date="1993" name="Biochem. Biophys. Res. Commun.">
        <title>Chicken and mouse focal adhesion kinases are similar in structure at their amino termini.</title>
        <authorList>
            <person name="Devor B.B."/>
            <person name="Zhang X."/>
            <person name="Patel S.K."/>
            <person name="Polte T.R."/>
            <person name="Hanks S.K."/>
        </authorList>
    </citation>
    <scope>NUCLEOTIDE SEQUENCE [MRNA] OF 1-63 (ISOFORM 1)</scope>
    <source>
        <tissue>Embryo</tissue>
    </source>
</reference>
<reference key="3">
    <citation type="journal article" date="1993" name="Mol. Cell. Biol.">
        <title>Autonomous expression of a noncatalytic domain of the focal adhesion-associated protein tyrosine kinase pp125FAK.</title>
        <authorList>
            <person name="Schaller M.D."/>
            <person name="Borgman C.A."/>
            <person name="Parsons J.T."/>
        </authorList>
    </citation>
    <scope>ALTERNATIVE PROMOTER USAGE</scope>
    <scope>IDENTIFICATION OF ISOFORM 2</scope>
    <scope>PHOSPHORYLATION</scope>
    <scope>SUBCELLULAR LOCATION</scope>
</reference>
<reference key="4">
    <citation type="journal article" date="1996" name="Mol. Cell. Biol.">
        <title>An SH3 domain-containing GTPase-activating protein for Rho and Cdc42 associates with focal adhesion kinase.</title>
        <authorList>
            <person name="Hildebrand J.D."/>
            <person name="Taylor J.M."/>
            <person name="Parsons J.T."/>
        </authorList>
    </citation>
    <scope>INTERACTION WITH ARHGAP26</scope>
</reference>
<reference key="5">
    <citation type="journal article" date="1999" name="J. Biol. Chem.">
        <title>Requirement of phosphatidylinositol 3-kinase in focal adhesion kinase-promoted cell migration.</title>
        <authorList>
            <person name="Reiske H.R."/>
            <person name="Kao S.C."/>
            <person name="Cary L.A."/>
            <person name="Guan J.L."/>
            <person name="Lai J.F."/>
            <person name="Chen H.C."/>
        </authorList>
    </citation>
    <scope>INTERACTION WITH PIK3R1 AND SRC</scope>
    <scope>MUTAGENESIS OF ASP-395</scope>
</reference>
<reference key="6">
    <citation type="journal article" date="2002" name="J. Biol. Chem.">
        <title>Association of Grb7 with phosphoinositides and its role in the regulation of cell migration.</title>
        <authorList>
            <person name="Shen T.L."/>
            <person name="Han D.C."/>
            <person name="Guan J.L."/>
        </authorList>
    </citation>
    <scope>INTERACTION WITH GRB7</scope>
</reference>
<reference key="7">
    <citation type="journal article" date="2002" name="Oncogene">
        <title>Tyr-863 phosphorylation enhances focal adhesion kinase autophosphorylation at Tyr-397.</title>
        <authorList>
            <person name="Leu T.H."/>
            <person name="Maa M.C."/>
        </authorList>
    </citation>
    <scope>PHOSPHORYLATION AT TYR-397; TYR-576 AND TYR-863</scope>
</reference>
<reference key="8">
    <citation type="journal article" date="2004" name="Nat. Neurosci.">
        <title>Focal adhesion kinase in netrin-1 signaling.</title>
        <authorList>
            <person name="Ren X.R."/>
            <person name="Ming G.L."/>
            <person name="Xie Y."/>
            <person name="Hong Y."/>
            <person name="Sun D.M."/>
            <person name="Zhao Z.Q."/>
            <person name="Feng Z."/>
            <person name="Wang Q."/>
            <person name="Shim S."/>
            <person name="Chen Z.F."/>
            <person name="Song H.J."/>
            <person name="Mei L."/>
            <person name="Xiong W.C."/>
        </authorList>
    </citation>
    <scope>FUNCTION</scope>
    <scope>INTERACTION WITH DCC</scope>
</reference>
<reference key="9">
    <citation type="journal article" date="2004" name="Nat. Neurosci.">
        <title>Activation of FAK and Src are receptor-proximal events required for netrin signaling.</title>
        <authorList>
            <person name="Li W."/>
            <person name="Lee J."/>
            <person name="Vikis H.G."/>
            <person name="Lee S.H."/>
            <person name="Liu G."/>
            <person name="Aurandt J."/>
            <person name="Shen T.L."/>
            <person name="Fearon E.R."/>
            <person name="Guan J.L."/>
            <person name="Han M."/>
            <person name="Rao Y."/>
            <person name="Hong K."/>
            <person name="Guan K.L."/>
        </authorList>
    </citation>
    <scope>FUNCTION</scope>
    <scope>INTERACTION WITH DCC</scope>
</reference>
<reference key="10">
    <citation type="journal article" date="2004" name="Nat. Neurosci.">
        <title>Netrin requires focal adhesion kinase and Src family kinases for axon outgrowth and attraction.</title>
        <authorList>
            <person name="Liu G."/>
            <person name="Beggs H."/>
            <person name="Jurgensen C."/>
            <person name="Park H.T."/>
            <person name="Tang H."/>
            <person name="Gorski J."/>
            <person name="Jones K.R."/>
            <person name="Reichardt L.F."/>
            <person name="Wu J."/>
            <person name="Rao Y."/>
        </authorList>
    </citation>
    <scope>FUNCTION</scope>
</reference>
<reference key="11">
    <citation type="journal article" date="2007" name="Nat. Cell Biol.">
        <title>Focal adhesion kinase controls actin assembly via a FERM-mediated interaction with the Arp2/3 complex.</title>
        <authorList>
            <person name="Serrels B."/>
            <person name="Serrels A."/>
            <person name="Brunton V.G."/>
            <person name="Holt M."/>
            <person name="McLean G.W."/>
            <person name="Gray C.H."/>
            <person name="Jones G.E."/>
            <person name="Frame M.C."/>
        </authorList>
    </citation>
    <scope>INTERACTION WITH THE ARP2/3 COMPLEX</scope>
</reference>
<reference key="12">
    <citation type="journal article" date="2010" name="Arterioscler. Thromb. Vasc. Biol.">
        <title>FRNK inhibition of focal adhesion kinase-dependent signaling and migration in vascular smooth muscle cells.</title>
        <authorList>
            <person name="Koshman Y.E."/>
            <person name="Kim T."/>
            <person name="Chu M."/>
            <person name="Engman S.J."/>
            <person name="Iyengar R."/>
            <person name="Robia S.L."/>
            <person name="Samarel A.M."/>
        </authorList>
    </citation>
    <scope>FUNCTION</scope>
</reference>
<reference key="13">
    <citation type="journal article" date="2011" name="Arterioscler. Thromb. Vasc. Biol.">
        <title>Focal adhesion kinase-related nonkinase inhibits vascular smooth muscle cell invasion by focal adhesion targeting, tyrosine 168 phosphorylation, and competition for p130Cas Binding.</title>
        <authorList>
            <person name="Koshman Y.E."/>
            <person name="Chu M."/>
            <person name="Engman S.J."/>
            <person name="Kim T."/>
            <person name="Iyengar R."/>
            <person name="Robia S.L."/>
            <person name="Samarel A.M."/>
        </authorList>
    </citation>
    <scope>FUNCTION</scope>
</reference>
<reference key="14">
    <citation type="journal article" date="2011" name="Cardiovasc. Res.">
        <title>Serine-910 phosphorylation of focal adhesion kinase is critical for sarcomere reorganization in cardiomyocyte hypertrophy.</title>
        <authorList>
            <person name="Chu M."/>
            <person name="Iyengar R."/>
            <person name="Koshman Y.E."/>
            <person name="Kim T."/>
            <person name="Russell B."/>
            <person name="Martin J.L."/>
            <person name="Heroux A.L."/>
            <person name="Robia S.L."/>
            <person name="Samarel A.M."/>
        </authorList>
    </citation>
    <scope>PHOSPHORYLATION AT SER-911</scope>
    <scope>FUNCTION</scope>
</reference>
<reference key="15">
    <citation type="journal article" date="2002" name="Mol. Cell. Biol.">
        <title>Structural insight into the mechanisms of targeting and signaling of focal adhesion kinase.</title>
        <authorList>
            <person name="Liu G."/>
            <person name="Guibao C.D."/>
            <person name="Zheng J."/>
        </authorList>
    </citation>
    <scope>STRUCTURE BY NMR OF 916-1053</scope>
</reference>
<reference key="16">
    <citation type="journal article" date="2004" name="J. Biol. Chem.">
        <title>NMR solution structure of the focal adhesion targeting domain of focal adhesion kinase in complex with a paxillin LD peptide: evidence for a two-site binding model.</title>
        <authorList>
            <person name="Gao G."/>
            <person name="Prutzman K.C."/>
            <person name="King M.L."/>
            <person name="Scheswohl D.M."/>
            <person name="DeRose E.F."/>
            <person name="London R.E."/>
            <person name="Schaller M.D."/>
            <person name="Campbell S.L."/>
        </authorList>
    </citation>
    <scope>STRUCTURE BY NMR OF 920-1053 IN COMPLEX WITH PXN</scope>
    <scope>INTERACTION WITH PXN</scope>
</reference>
<reference key="17">
    <citation type="journal article" date="2004" name="Structure">
        <title>The focal adhesion targeting domain of focal adhesion kinase contains a hinge region that modulates tyrosine 926 phosphorylation.</title>
        <authorList>
            <person name="Prutzman K.C."/>
            <person name="Gao G."/>
            <person name="King M.L."/>
            <person name="Iyer V.V."/>
            <person name="Mueller G.A."/>
            <person name="Schaller M.D."/>
            <person name="Campbell S.L."/>
        </authorList>
    </citation>
    <scope>STRUCTURE BY NMR OF 920-1053</scope>
</reference>
<reference key="18">
    <citation type="journal article" date="2006" name="J. Biol. Chem.">
        <title>Crystal structure of the FERM domain of focal adhesion kinase.</title>
        <authorList>
            <person name="Ceccarelli D.F."/>
            <person name="Song H.K."/>
            <person name="Poy F."/>
            <person name="Schaller M.D."/>
            <person name="Eck M.J."/>
        </authorList>
    </citation>
    <scope>X-RAY CRYSTALLOGRAPHY (2.35 ANGSTROMS) OF 31-405</scope>
</reference>
<reference key="19">
    <citation type="journal article" date="2007" name="Cell">
        <title>Structural basis for the autoinhibition of focal adhesion kinase.</title>
        <authorList>
            <person name="Lietha D."/>
            <person name="Cai X."/>
            <person name="Ceccarelli D.F."/>
            <person name="Li Y."/>
            <person name="Schaller M.D."/>
            <person name="Eck M.J."/>
        </authorList>
    </citation>
    <scope>X-RAY CRYSTALLOGRAPHY (2.30 ANGSTROMS) OF 411-686 IN COMPLEXES WITH STAUROSPORINE AND ATP ANALOG</scope>
    <scope>ACTIVITY REGULATION</scope>
    <scope>PHOSPHORYLATION AT TYR-576 AND TYR-577</scope>
</reference>
<reference key="20">
    <citation type="journal article" date="2008" name="PLoS ONE">
        <title>Crystal structures of the FAK kinase in complex with TAE226 and related bis-anilino pyrimidine inhibitors reveal a helical DFG conformation.</title>
        <authorList>
            <person name="Lietha D."/>
            <person name="Eck M.J."/>
        </authorList>
    </citation>
    <scope>X-RAY CRYSTALLOGRAPHY (1.65 ANGSTROMS) OF 411-686 IN COMPLEX WITH TAE226</scope>
</reference>
<proteinExistence type="evidence at protein level"/>
<keyword id="KW-0002">3D-structure</keyword>
<keyword id="KW-0877">Alternative promoter usage</keyword>
<keyword id="KW-0037">Angiogenesis</keyword>
<keyword id="KW-0067">ATP-binding</keyword>
<keyword id="KW-0965">Cell junction</keyword>
<keyword id="KW-1003">Cell membrane</keyword>
<keyword id="KW-0966">Cell projection</keyword>
<keyword id="KW-0963">Cytoplasm</keyword>
<keyword id="KW-0206">Cytoskeleton</keyword>
<keyword id="KW-0217">Developmental protein</keyword>
<keyword id="KW-0418">Kinase</keyword>
<keyword id="KW-0472">Membrane</keyword>
<keyword id="KW-0547">Nucleotide-binding</keyword>
<keyword id="KW-0539">Nucleus</keyword>
<keyword id="KW-0597">Phosphoprotein</keyword>
<keyword id="KW-1185">Reference proteome</keyword>
<keyword id="KW-0808">Transferase</keyword>
<keyword id="KW-0829">Tyrosine-protein kinase</keyword>
<sequence length="1053" mass="119207">MAAAYLDPNLNHTPSSSAKTHLGTGMERSPGAMERVLKVFHYFENSSEPTTWASIIRHGDATDVRGIIQKIVDCHKVKNVACYGLRLSHLQSEEVHWLHLDMGVSNVREKFELAHPPEEWKYELRIRYLPKGFLNQFTEDKPTLNFFYQQVKNDYMLEIADQVDQEIALKLGCLEIRRSYGEMRGNALEKKSNYEVLEKDVGLRRFFPKSLLDSVKAKTLRKLIQQTFRQFANLNREESILKFFEILSPVYRFDKECFKCALGSSWIISVELAIGPEEGISYLTDKGANPTHLADFNQVQTIQYSNSEDKDRKGMLQLKIAGAPEPLTVTAPSLTIAENMADLIDGYCRLVNGATQSFIIRPQKEGERALPSIPKLANNEKQGVRSHTVSVSETDDYAEIIDEEDTYTMPSTRDYEIQRERIELGRCIGEGQFGDVHQGIYMSPENPAMAVAIKTCKNCTSDSVREKFLQEALTMRQFDHPHIVKLIGVITENPVWIIMELCTLGELRSFLQVRKFSLDLASLILYAYQLSTALAYLESKRFVHRDIAARNVLVSATDCVKLGDFGLSRYMEDSTYYKASKGKLPIKWMAPESINFRRFTSASDVWMFGVCMWEILMHGVKPFQGVKNNDVIGRIENGERLPMPPNCPPTLYSLMTKCWAYDPSRRPRFTELKAQLSTILEEEKLQQEERMRMESRRQVTVSWDSGGSDEAPPKPSRPGYPSPRSSEGFYPSPQHMVQPNHYQVSGYSGSHGIPAMAGSIYPGQASLLDQTDSWNHRPQEVSAWQPNMEDSGTLDVRGMGQVLPTHLMEERLIRQQQEMEEDQRWLEKEERFLVMKPDVRLSRGSIEREDGGLQGPAGNQHIYQPVGKPDHAAPPKKPPRPGAPHLGSLASLNSPVDSYNEGVKIKPQEISPPPTANLDRSNDKVYENVTGLVKAVIEMSSKIQPAPPEEYVPMVKEVGLALRTLLATVDESLPVLPASTHREIEMAQKLLNSDLAELINKMKLAQQYVMTSLQQEYKKQMLTAAHALAVDAKNLLDVIDQARLKMISQSRPH</sequence>
<feature type="chain" id="PRO_0000088076" description="Focal adhesion kinase 1">
    <location>
        <begin position="1"/>
        <end position="1053"/>
    </location>
</feature>
<feature type="domain" description="FERM" evidence="5">
    <location>
        <begin position="35"/>
        <end position="355"/>
    </location>
</feature>
<feature type="domain" description="Protein kinase" evidence="6">
    <location>
        <begin position="422"/>
        <end position="680"/>
    </location>
</feature>
<feature type="region of interest" description="Disordered" evidence="8">
    <location>
        <begin position="1"/>
        <end position="27"/>
    </location>
</feature>
<feature type="region of interest" description="Disordered" evidence="8">
    <location>
        <begin position="686"/>
        <end position="741"/>
    </location>
</feature>
<feature type="region of interest" description="Disordered" evidence="8">
    <location>
        <begin position="843"/>
        <end position="892"/>
    </location>
</feature>
<feature type="compositionally biased region" description="Polar residues" evidence="8">
    <location>
        <begin position="10"/>
        <end position="19"/>
    </location>
</feature>
<feature type="compositionally biased region" description="Basic and acidic residues" evidence="8">
    <location>
        <begin position="686"/>
        <end position="697"/>
    </location>
</feature>
<feature type="active site" description="Proton acceptor" evidence="6 7">
    <location>
        <position position="546"/>
    </location>
</feature>
<feature type="binding site" evidence="24">
    <location>
        <begin position="428"/>
        <end position="434"/>
    </location>
    <ligand>
        <name>ATP</name>
        <dbReference type="ChEBI" id="CHEBI:30616"/>
    </ligand>
</feature>
<feature type="binding site" evidence="24">
    <location>
        <position position="454"/>
    </location>
    <ligand>
        <name>ATP</name>
        <dbReference type="ChEBI" id="CHEBI:30616"/>
    </ligand>
</feature>
<feature type="binding site" evidence="24">
    <location>
        <begin position="500"/>
        <end position="502"/>
    </location>
    <ligand>
        <name>ATP</name>
        <dbReference type="ChEBI" id="CHEBI:30616"/>
    </ligand>
</feature>
<feature type="modified residue" description="Phosphotyrosine; by autocatalysis" evidence="11">
    <location>
        <position position="397"/>
    </location>
</feature>
<feature type="modified residue" description="Phosphotyrosine" evidence="1">
    <location>
        <position position="407"/>
    </location>
</feature>
<feature type="modified residue" description="Phosphotyrosine; by SRC" evidence="11 16">
    <location>
        <position position="576"/>
    </location>
</feature>
<feature type="modified residue" description="Phosphotyrosine; by SRC" evidence="1">
    <location>
        <position position="577"/>
    </location>
</feature>
<feature type="modified residue" description="Phosphotyrosine" evidence="11">
    <location>
        <position position="863"/>
    </location>
</feature>
<feature type="modified residue" description="Phosphoserine" evidence="21">
    <location>
        <position position="911"/>
    </location>
</feature>
<feature type="modified residue" description="Phosphotyrosine" evidence="1">
    <location>
        <position position="926"/>
    </location>
</feature>
<feature type="splice variant" id="VSP_042173" description="In isoform 2." evidence="24">
    <location>
        <begin position="1"/>
        <end position="692"/>
    </location>
</feature>
<feature type="mutagenesis site" description="Abolishes interaction with PIK3R1." evidence="9">
    <original>D</original>
    <variation>A</variation>
    <location>
        <position position="395"/>
    </location>
</feature>
<feature type="strand" evidence="31">
    <location>
        <begin position="36"/>
        <end position="40"/>
    </location>
</feature>
<feature type="helix" evidence="31">
    <location>
        <begin position="49"/>
        <end position="51"/>
    </location>
</feature>
<feature type="strand" evidence="31">
    <location>
        <begin position="53"/>
        <end position="58"/>
    </location>
</feature>
<feature type="helix" evidence="31">
    <location>
        <begin position="64"/>
        <end position="74"/>
    </location>
</feature>
<feature type="helix" evidence="31">
    <location>
        <begin position="80"/>
        <end position="82"/>
    </location>
</feature>
<feature type="strand" evidence="31">
    <location>
        <begin position="83"/>
        <end position="89"/>
    </location>
</feature>
<feature type="strand" evidence="31">
    <location>
        <begin position="95"/>
        <end position="98"/>
    </location>
</feature>
<feature type="strand" evidence="29">
    <location>
        <begin position="100"/>
        <end position="103"/>
    </location>
</feature>
<feature type="helix" evidence="31">
    <location>
        <begin position="104"/>
        <end position="114"/>
    </location>
</feature>
<feature type="helix" evidence="31">
    <location>
        <begin position="117"/>
        <end position="119"/>
    </location>
</feature>
<feature type="strand" evidence="31">
    <location>
        <begin position="120"/>
        <end position="126"/>
    </location>
</feature>
<feature type="helix" evidence="31">
    <location>
        <begin position="133"/>
        <end position="138"/>
    </location>
</feature>
<feature type="helix" evidence="31">
    <location>
        <begin position="141"/>
        <end position="158"/>
    </location>
</feature>
<feature type="turn" evidence="31">
    <location>
        <begin position="159"/>
        <end position="162"/>
    </location>
</feature>
<feature type="helix" evidence="31">
    <location>
        <begin position="165"/>
        <end position="179"/>
    </location>
</feature>
<feature type="turn" evidence="31">
    <location>
        <begin position="180"/>
        <end position="182"/>
    </location>
</feature>
<feature type="helix" evidence="31">
    <location>
        <begin position="187"/>
        <end position="189"/>
    </location>
</feature>
<feature type="helix" evidence="31">
    <location>
        <begin position="191"/>
        <end position="199"/>
    </location>
</feature>
<feature type="turn" evidence="28">
    <location>
        <begin position="200"/>
        <end position="202"/>
    </location>
</feature>
<feature type="helix" evidence="31">
    <location>
        <begin position="203"/>
        <end position="205"/>
    </location>
</feature>
<feature type="helix" evidence="31">
    <location>
        <begin position="209"/>
        <end position="213"/>
    </location>
</feature>
<feature type="helix" evidence="31">
    <location>
        <begin position="217"/>
        <end position="229"/>
    </location>
</feature>
<feature type="turn" evidence="31">
    <location>
        <begin position="230"/>
        <end position="233"/>
    </location>
</feature>
<feature type="helix" evidence="31">
    <location>
        <begin position="236"/>
        <end position="247"/>
    </location>
</feature>
<feature type="helix" evidence="31">
    <location>
        <begin position="248"/>
        <end position="250"/>
    </location>
</feature>
<feature type="strand" evidence="31">
    <location>
        <begin position="256"/>
        <end position="262"/>
    </location>
</feature>
<feature type="strand" evidence="31">
    <location>
        <begin position="264"/>
        <end position="266"/>
    </location>
</feature>
<feature type="strand" evidence="31">
    <location>
        <begin position="268"/>
        <end position="275"/>
    </location>
</feature>
<feature type="turn" evidence="31">
    <location>
        <begin position="276"/>
        <end position="278"/>
    </location>
</feature>
<feature type="strand" evidence="31">
    <location>
        <begin position="279"/>
        <end position="282"/>
    </location>
</feature>
<feature type="strand" evidence="27">
    <location>
        <begin position="285"/>
        <end position="288"/>
    </location>
</feature>
<feature type="strand" evidence="31">
    <location>
        <begin position="291"/>
        <end position="294"/>
    </location>
</feature>
<feature type="helix" evidence="31">
    <location>
        <begin position="296"/>
        <end position="298"/>
    </location>
</feature>
<feature type="strand" evidence="31">
    <location>
        <begin position="299"/>
        <end position="306"/>
    </location>
</feature>
<feature type="strand" evidence="31">
    <location>
        <begin position="309"/>
        <end position="311"/>
    </location>
</feature>
<feature type="strand" evidence="31">
    <location>
        <begin position="314"/>
        <end position="320"/>
    </location>
</feature>
<feature type="strand" evidence="31">
    <location>
        <begin position="327"/>
        <end position="333"/>
    </location>
</feature>
<feature type="helix" evidence="31">
    <location>
        <begin position="334"/>
        <end position="352"/>
    </location>
</feature>
<feature type="strand" evidence="31">
    <location>
        <begin position="398"/>
        <end position="400"/>
    </location>
</feature>
<feature type="helix" evidence="28">
    <location>
        <begin position="412"/>
        <end position="414"/>
    </location>
</feature>
<feature type="helix" evidence="30">
    <location>
        <begin position="419"/>
        <end position="421"/>
    </location>
</feature>
<feature type="strand" evidence="30">
    <location>
        <begin position="422"/>
        <end position="431"/>
    </location>
</feature>
<feature type="strand" evidence="30">
    <location>
        <begin position="434"/>
        <end position="441"/>
    </location>
</feature>
<feature type="strand" evidence="32">
    <location>
        <begin position="444"/>
        <end position="446"/>
    </location>
</feature>
<feature type="strand" evidence="30">
    <location>
        <begin position="449"/>
        <end position="455"/>
    </location>
</feature>
<feature type="turn" evidence="30">
    <location>
        <begin position="457"/>
        <end position="460"/>
    </location>
</feature>
<feature type="helix" evidence="30">
    <location>
        <begin position="462"/>
        <end position="475"/>
    </location>
</feature>
<feature type="strand" evidence="30">
    <location>
        <begin position="486"/>
        <end position="490"/>
    </location>
</feature>
<feature type="strand" evidence="30">
    <location>
        <begin position="492"/>
        <end position="494"/>
    </location>
</feature>
<feature type="strand" evidence="30">
    <location>
        <begin position="496"/>
        <end position="500"/>
    </location>
</feature>
<feature type="helix" evidence="30">
    <location>
        <begin position="507"/>
        <end position="514"/>
    </location>
</feature>
<feature type="turn" evidence="30">
    <location>
        <begin position="515"/>
        <end position="517"/>
    </location>
</feature>
<feature type="helix" evidence="30">
    <location>
        <begin position="520"/>
        <end position="539"/>
    </location>
</feature>
<feature type="helix" evidence="30">
    <location>
        <begin position="549"/>
        <end position="551"/>
    </location>
</feature>
<feature type="strand" evidence="30">
    <location>
        <begin position="552"/>
        <end position="556"/>
    </location>
</feature>
<feature type="strand" evidence="30">
    <location>
        <begin position="559"/>
        <end position="562"/>
    </location>
</feature>
<feature type="helix" evidence="32">
    <location>
        <begin position="565"/>
        <end position="568"/>
    </location>
</feature>
<feature type="helix" evidence="30">
    <location>
        <begin position="572"/>
        <end position="575"/>
    </location>
</feature>
<feature type="helix" evidence="30">
    <location>
        <begin position="577"/>
        <end position="579"/>
    </location>
</feature>
<feature type="helix" evidence="30">
    <location>
        <begin position="586"/>
        <end position="588"/>
    </location>
</feature>
<feature type="helix" evidence="30">
    <location>
        <begin position="591"/>
        <end position="596"/>
    </location>
</feature>
<feature type="helix" evidence="30">
    <location>
        <begin position="601"/>
        <end position="616"/>
    </location>
</feature>
<feature type="turn" evidence="30">
    <location>
        <begin position="617"/>
        <end position="619"/>
    </location>
</feature>
<feature type="turn" evidence="30">
    <location>
        <begin position="622"/>
        <end position="625"/>
    </location>
</feature>
<feature type="helix" evidence="30">
    <location>
        <begin position="628"/>
        <end position="630"/>
    </location>
</feature>
<feature type="helix" evidence="30">
    <location>
        <begin position="631"/>
        <end position="636"/>
    </location>
</feature>
<feature type="helix" evidence="30">
    <location>
        <begin position="649"/>
        <end position="658"/>
    </location>
</feature>
<feature type="helix" evidence="30">
    <location>
        <begin position="663"/>
        <end position="665"/>
    </location>
</feature>
<feature type="helix" evidence="30">
    <location>
        <begin position="669"/>
        <end position="684"/>
    </location>
</feature>
<feature type="turn" evidence="25">
    <location>
        <begin position="919"/>
        <end position="921"/>
    </location>
</feature>
<feature type="helix" evidence="25">
    <location>
        <begin position="922"/>
        <end position="941"/>
    </location>
</feature>
<feature type="turn" evidence="25">
    <location>
        <begin position="942"/>
        <end position="945"/>
    </location>
</feature>
<feature type="helix" evidence="25">
    <location>
        <begin position="948"/>
        <end position="975"/>
    </location>
</feature>
<feature type="turn" evidence="26">
    <location>
        <begin position="978"/>
        <end position="980"/>
    </location>
</feature>
<feature type="helix" evidence="25">
    <location>
        <begin position="982"/>
        <end position="1005"/>
    </location>
</feature>
<feature type="strand" evidence="25">
    <location>
        <begin position="1008"/>
        <end position="1012"/>
    </location>
</feature>
<feature type="helix" evidence="25">
    <location>
        <begin position="1014"/>
        <end position="1047"/>
    </location>
</feature>
<name>FAK1_CHICK</name>
<comment type="function">
    <text evidence="13 14 15 19 20 21">Non-receptor protein-tyrosine kinase that plays an essential role in regulating cell migration, adhesion, spreading, reorganization of the actin cytoskeleton, formation and disassembly of focal adhesions and cell protrusions, cell cycle progression, cell proliferation and apoptosis. Required for early embryonic development, embryonic angiogenesis, normal cardiomyocyte migration and proliferation, and normal heart development. Regulates axon growth and neuronal cell migration, axon branching and synapse formation; required for normal development of the nervous system. Plays a role in osteogenesis and differentiation of osteoblasts. Functions in integrin signal transduction, but also in signaling downstream of numerous growth factor receptors, G-protein coupled receptors (GPCR), ephrin receptors, netrin receptors and LDL receptors. Forms multisubunit signaling complexes with SRC and SRC family members upon activation; this leads to the phosphorylation of additional tyrosine residues, creating binding sites for scaffold proteins, effectors and substrates. Regulates numerous signaling pathways. Promotes activation of phosphatidylinositol 3-kinase and the AKT1 signaling cascade. Promotes activation of MAPK1/ERK2, MAPK3/ERK1 and the MAP kinase signaling cascade. Promotes localized and transient activation of guanine nucleotide exchange factors (GEFs) and GTPase-activating proteins (GAPs), and thereby modulates the activity of Rho family GTPases. Signaling via CAS family members mediates activation of RAC1. Regulates P53/TP53 activity and stability. Phosphorylates SRC; this increases SRC kinase activity. Isoform 2 (FRNK) does not contain a kinase domain and inhibits PTK2/FAK1 phosphorylation and signaling.</text>
</comment>
<comment type="catalytic activity">
    <reaction evidence="7">
        <text>L-tyrosyl-[protein] + ATP = O-phospho-L-tyrosyl-[protein] + ADP + H(+)</text>
        <dbReference type="Rhea" id="RHEA:10596"/>
        <dbReference type="Rhea" id="RHEA-COMP:10136"/>
        <dbReference type="Rhea" id="RHEA-COMP:20101"/>
        <dbReference type="ChEBI" id="CHEBI:15378"/>
        <dbReference type="ChEBI" id="CHEBI:30616"/>
        <dbReference type="ChEBI" id="CHEBI:46858"/>
        <dbReference type="ChEBI" id="CHEBI:61978"/>
        <dbReference type="ChEBI" id="CHEBI:456216"/>
        <dbReference type="EC" id="2.7.10.2"/>
    </reaction>
</comment>
<comment type="activity regulation">
    <text evidence="16">Subject to autoinhibition, mediated by interactions between the FERM domain and the kinase domain. Activated by autophosphorylation at Tyr-397. This promotes interaction with SRC and phosphorylation at Tyr-576 and Tyr-577 in the kinase activation loop. Phosphorylation at Tyr-576 and Tyr-577 is required for maximal kinase activity. Inhibited by TAE226.</text>
</comment>
<comment type="subunit">
    <text evidence="9 10 12 14 15 17 18 23">Interacts with ARHGAP26, GRB7, DCC, PIK3R1, PXN and SRC. Interacts with the ARP2/3 complex.</text>
</comment>
<comment type="interaction">
    <interactant intactId="EBI-2896409">
        <id>Q00944</id>
    </interactant>
    <interactant intactId="EBI-2896409">
        <id>Q00944</id>
        <label>PTK2</label>
    </interactant>
    <organismsDiffer>false</organismsDiffer>
    <experiments>3</experiments>
</comment>
<comment type="interaction">
    <interactant intactId="EBI-2896409">
        <id>Q00944</id>
    </interactant>
    <interactant intactId="EBI-2896280">
        <id>P49024</id>
        <label>PXN</label>
    </interactant>
    <organismsDiffer>false</organismsDiffer>
    <experiments>2</experiments>
</comment>
<comment type="interaction">
    <interactant intactId="EBI-2896409">
        <id>Q00944</id>
    </interactant>
    <interactant intactId="EBI-848039">
        <id>P00523</id>
        <label>SRC</label>
    </interactant>
    <organismsDiffer>false</organismsDiffer>
    <experiments>3</experiments>
</comment>
<comment type="interaction">
    <interactant intactId="EBI-2896409">
        <id>Q00944</id>
    </interactant>
    <interactant intactId="EBI-351419">
        <id>P61157</id>
        <label>ACTR3</label>
    </interactant>
    <organismsDiffer>true</organismsDiffer>
    <experiments>5</experiments>
</comment>
<comment type="interaction">
    <interactant intactId="EBI-2896409">
        <id>Q00944</id>
    </interactant>
    <interactant intactId="EBI-1039152">
        <id>P08581</id>
        <label>MET</label>
    </interactant>
    <organismsDiffer>true</organismsDiffer>
    <experiments>5</experiments>
</comment>
<comment type="subcellular location">
    <subcellularLocation>
        <location evidence="22">Cell junction</location>
        <location evidence="22">Focal adhesion</location>
    </subcellularLocation>
    <subcellularLocation>
        <location evidence="22">Cell membrane</location>
        <topology evidence="22">Peripheral membrane protein</topology>
        <orientation evidence="22">Cytoplasmic side</orientation>
    </subcellularLocation>
    <subcellularLocation>
        <location evidence="22">Cytoplasm</location>
        <location evidence="22">Perinuclear region</location>
    </subcellularLocation>
    <subcellularLocation>
        <location>Cytoplasm</location>
        <location>Cell cortex</location>
    </subcellularLocation>
    <subcellularLocation>
        <location evidence="2">Cytoplasm</location>
        <location evidence="2">Cytoskeleton</location>
    </subcellularLocation>
    <subcellularLocation>
        <location evidence="1">Cytoplasm</location>
        <location evidence="1">Cytoskeleton</location>
        <location evidence="1">Microtubule organizing center</location>
        <location evidence="1">Centrosome</location>
    </subcellularLocation>
    <subcellularLocation>
        <location evidence="22">Nucleus</location>
    </subcellularLocation>
    <subcellularLocation>
        <location evidence="4">Cytoplasm</location>
        <location evidence="4">Cytoskeleton</location>
        <location evidence="4">Cilium basal body</location>
    </subcellularLocation>
    <subcellularLocation>
        <location evidence="3">Cytoplasm</location>
    </subcellularLocation>
    <text evidence="3">Constituent of focal adhesions. Detected at microtubules.</text>
</comment>
<comment type="alternative products">
    <event type="alternative promoter"/>
    <isoform>
        <id>Q00944-1</id>
        <name>1</name>
        <sequence type="displayed"/>
    </isoform>
    <isoform>
        <id>Q00944-2</id>
        <name>2</name>
        <name>FRNK</name>
        <sequence type="described" ref="VSP_042173"/>
    </isoform>
</comment>
<comment type="domain">
    <text>The C-terminal region is the site of focal adhesion targeting (FAT) sequence which mediates the localization of FAK1 to focal adhesions.</text>
</comment>
<comment type="PTM">
    <text evidence="11 16 21 22">Phosphorylated on tyrosine residues upon activation, e.g. upon integrin signaling. Tyr-397 is the major autophosphorylation site, but other kinases can also phosphorylate this residue. Phosphorylation at Tyr-397 promotes interaction with SRC and SRC family members, leading to phosphorylation at Tyr-576, Tyr-577 and at additional tyrosine residues. Isoform 2 is phosphorylated on serine or threonine residues, but apparently not on tyrosine residues.</text>
</comment>
<comment type="similarity">
    <text evidence="6">Belongs to the protein kinase superfamily. Tyr protein kinase family. FAK subfamily.</text>
</comment>
<protein>
    <recommendedName>
        <fullName>Focal adhesion kinase 1</fullName>
        <shortName>FADK 1</shortName>
        <ecNumber>2.7.10.2</ecNumber>
    </recommendedName>
    <alternativeName>
        <fullName>Focal adhesion kinase-related nonkinase</fullName>
        <shortName>FRNK</shortName>
        <shortName>p41/p43FRNK</shortName>
    </alternativeName>
    <alternativeName>
        <fullName>Protein-tyrosine kinase 2</fullName>
    </alternativeName>
    <alternativeName>
        <fullName>p125FAK</fullName>
    </alternativeName>
    <alternativeName>
        <fullName>pp125FAK</fullName>
    </alternativeName>
</protein>
<evidence type="ECO:0000250" key="1"/>
<evidence type="ECO:0000250" key="2">
    <source>
        <dbReference type="UniProtKB" id="O35346"/>
    </source>
</evidence>
<evidence type="ECO:0000250" key="3">
    <source>
        <dbReference type="UniProtKB" id="P34152"/>
    </source>
</evidence>
<evidence type="ECO:0000250" key="4">
    <source>
        <dbReference type="UniProtKB" id="Q05397"/>
    </source>
</evidence>
<evidence type="ECO:0000255" key="5">
    <source>
        <dbReference type="PROSITE-ProRule" id="PRU00084"/>
    </source>
</evidence>
<evidence type="ECO:0000255" key="6">
    <source>
        <dbReference type="PROSITE-ProRule" id="PRU00159"/>
    </source>
</evidence>
<evidence type="ECO:0000255" key="7">
    <source>
        <dbReference type="PROSITE-ProRule" id="PRU10028"/>
    </source>
</evidence>
<evidence type="ECO:0000256" key="8">
    <source>
        <dbReference type="SAM" id="MobiDB-lite"/>
    </source>
</evidence>
<evidence type="ECO:0000269" key="9">
    <source>
    </source>
</evidence>
<evidence type="ECO:0000269" key="10">
    <source>
    </source>
</evidence>
<evidence type="ECO:0000269" key="11">
    <source>
    </source>
</evidence>
<evidence type="ECO:0000269" key="12">
    <source>
    </source>
</evidence>
<evidence type="ECO:0000269" key="13">
    <source>
    </source>
</evidence>
<evidence type="ECO:0000269" key="14">
    <source>
    </source>
</evidence>
<evidence type="ECO:0000269" key="15">
    <source>
    </source>
</evidence>
<evidence type="ECO:0000269" key="16">
    <source>
    </source>
</evidence>
<evidence type="ECO:0000269" key="17">
    <source>
    </source>
</evidence>
<evidence type="ECO:0000269" key="18">
    <source>
    </source>
</evidence>
<evidence type="ECO:0000269" key="19">
    <source>
    </source>
</evidence>
<evidence type="ECO:0000269" key="20">
    <source>
    </source>
</evidence>
<evidence type="ECO:0000269" key="21">
    <source>
    </source>
</evidence>
<evidence type="ECO:0000269" key="22">
    <source>
    </source>
</evidence>
<evidence type="ECO:0000269" key="23">
    <source>
    </source>
</evidence>
<evidence type="ECO:0000305" key="24"/>
<evidence type="ECO:0007829" key="25">
    <source>
        <dbReference type="PDB" id="1KTM"/>
    </source>
</evidence>
<evidence type="ECO:0007829" key="26">
    <source>
        <dbReference type="PDB" id="1PV3"/>
    </source>
</evidence>
<evidence type="ECO:0007829" key="27">
    <source>
        <dbReference type="PDB" id="2AEH"/>
    </source>
</evidence>
<evidence type="ECO:0007829" key="28">
    <source>
        <dbReference type="PDB" id="2J0J"/>
    </source>
</evidence>
<evidence type="ECO:0007829" key="29">
    <source>
        <dbReference type="PDB" id="2J0M"/>
    </source>
</evidence>
<evidence type="ECO:0007829" key="30">
    <source>
        <dbReference type="PDB" id="4D4R"/>
    </source>
</evidence>
<evidence type="ECO:0007829" key="31">
    <source>
        <dbReference type="PDB" id="6CB0"/>
    </source>
</evidence>
<evidence type="ECO:0007829" key="32">
    <source>
        <dbReference type="PDB" id="6GCX"/>
    </source>
</evidence>